<evidence type="ECO:0000255" key="1">
    <source>
        <dbReference type="HAMAP-Rule" id="MF_00176"/>
    </source>
</evidence>
<accession>B8DD73</accession>
<proteinExistence type="inferred from homology"/>
<protein>
    <recommendedName>
        <fullName evidence="1">Serine--tRNA ligase</fullName>
        <ecNumber evidence="1">6.1.1.11</ecNumber>
    </recommendedName>
    <alternativeName>
        <fullName evidence="1">Seryl-tRNA synthetase</fullName>
        <shortName evidence="1">SerRS</shortName>
    </alternativeName>
    <alternativeName>
        <fullName evidence="1">Seryl-tRNA(Ser/Sec) synthetase</fullName>
    </alternativeName>
</protein>
<gene>
    <name evidence="1" type="primary">serS</name>
    <name type="ordered locus">LMHCC_2785</name>
</gene>
<comment type="function">
    <text evidence="1">Catalyzes the attachment of serine to tRNA(Ser). Is also able to aminoacylate tRNA(Sec) with serine, to form the misacylated tRNA L-seryl-tRNA(Sec), which will be further converted into selenocysteinyl-tRNA(Sec).</text>
</comment>
<comment type="catalytic activity">
    <reaction evidence="1">
        <text>tRNA(Ser) + L-serine + ATP = L-seryl-tRNA(Ser) + AMP + diphosphate + H(+)</text>
        <dbReference type="Rhea" id="RHEA:12292"/>
        <dbReference type="Rhea" id="RHEA-COMP:9669"/>
        <dbReference type="Rhea" id="RHEA-COMP:9703"/>
        <dbReference type="ChEBI" id="CHEBI:15378"/>
        <dbReference type="ChEBI" id="CHEBI:30616"/>
        <dbReference type="ChEBI" id="CHEBI:33019"/>
        <dbReference type="ChEBI" id="CHEBI:33384"/>
        <dbReference type="ChEBI" id="CHEBI:78442"/>
        <dbReference type="ChEBI" id="CHEBI:78533"/>
        <dbReference type="ChEBI" id="CHEBI:456215"/>
        <dbReference type="EC" id="6.1.1.11"/>
    </reaction>
</comment>
<comment type="catalytic activity">
    <reaction evidence="1">
        <text>tRNA(Sec) + L-serine + ATP = L-seryl-tRNA(Sec) + AMP + diphosphate + H(+)</text>
        <dbReference type="Rhea" id="RHEA:42580"/>
        <dbReference type="Rhea" id="RHEA-COMP:9742"/>
        <dbReference type="Rhea" id="RHEA-COMP:10128"/>
        <dbReference type="ChEBI" id="CHEBI:15378"/>
        <dbReference type="ChEBI" id="CHEBI:30616"/>
        <dbReference type="ChEBI" id="CHEBI:33019"/>
        <dbReference type="ChEBI" id="CHEBI:33384"/>
        <dbReference type="ChEBI" id="CHEBI:78442"/>
        <dbReference type="ChEBI" id="CHEBI:78533"/>
        <dbReference type="ChEBI" id="CHEBI:456215"/>
        <dbReference type="EC" id="6.1.1.11"/>
    </reaction>
</comment>
<comment type="pathway">
    <text evidence="1">Aminoacyl-tRNA biosynthesis; selenocysteinyl-tRNA(Sec) biosynthesis; L-seryl-tRNA(Sec) from L-serine and tRNA(Sec): step 1/1.</text>
</comment>
<comment type="subunit">
    <text evidence="1">Homodimer. The tRNA molecule binds across the dimer.</text>
</comment>
<comment type="subcellular location">
    <subcellularLocation>
        <location evidence="1">Cytoplasm</location>
    </subcellularLocation>
</comment>
<comment type="domain">
    <text evidence="1">Consists of two distinct domains, a catalytic core and a N-terminal extension that is involved in tRNA binding.</text>
</comment>
<comment type="similarity">
    <text evidence="1">Belongs to the class-II aminoacyl-tRNA synthetase family. Type-1 seryl-tRNA synthetase subfamily.</text>
</comment>
<sequence>MLDVKLLRNNFDEVKQKLQNRGEDLGEFEKFGELDKRRRTLIVETEALKSQRNEVSQEIAKLKREKQDADAKIEEMRVVGDRIKTLDIELREIDEKLDMILMSIPNIPHESTPVGESEDDNVEIRKWGEVREFDFEPKAHWDLGTDLDILDFENAAKVTGSRFVFYKKLGARLERALINFMMDLHSNEHGYEEMLPPYMVNRASMTGTGQLPKFEEDAFLIEAEDYFLIPTAEVPVTNYHREDILKAEDLPRKYTAFSACFRSEAGSAGRDTRGLIRQHQFNKVELVQFVKPEDSYAALEKLTGNAEEVLRRLELPYRVLSMCTADLGFTAAKKYDLEVWIPSYNSYREISSCSNFESFQARRANIRFRREPGSKPEYVHTLNGSGLALGRTVAAILENYQDADGSVRIPKVLQGYMGGIEKIELPK</sequence>
<feature type="chain" id="PRO_1000199489" description="Serine--tRNA ligase">
    <location>
        <begin position="1"/>
        <end position="427"/>
    </location>
</feature>
<feature type="binding site" evidence="1">
    <location>
        <begin position="231"/>
        <end position="233"/>
    </location>
    <ligand>
        <name>L-serine</name>
        <dbReference type="ChEBI" id="CHEBI:33384"/>
    </ligand>
</feature>
<feature type="binding site" evidence="1">
    <location>
        <begin position="262"/>
        <end position="264"/>
    </location>
    <ligand>
        <name>ATP</name>
        <dbReference type="ChEBI" id="CHEBI:30616"/>
    </ligand>
</feature>
<feature type="binding site" evidence="1">
    <location>
        <position position="285"/>
    </location>
    <ligand>
        <name>L-serine</name>
        <dbReference type="ChEBI" id="CHEBI:33384"/>
    </ligand>
</feature>
<feature type="binding site" evidence="1">
    <location>
        <begin position="349"/>
        <end position="352"/>
    </location>
    <ligand>
        <name>ATP</name>
        <dbReference type="ChEBI" id="CHEBI:30616"/>
    </ligand>
</feature>
<feature type="binding site" evidence="1">
    <location>
        <position position="385"/>
    </location>
    <ligand>
        <name>L-serine</name>
        <dbReference type="ChEBI" id="CHEBI:33384"/>
    </ligand>
</feature>
<name>SYS_LISMH</name>
<organism>
    <name type="scientific">Listeria monocytogenes serotype 4a (strain HCC23)</name>
    <dbReference type="NCBI Taxonomy" id="552536"/>
    <lineage>
        <taxon>Bacteria</taxon>
        <taxon>Bacillati</taxon>
        <taxon>Bacillota</taxon>
        <taxon>Bacilli</taxon>
        <taxon>Bacillales</taxon>
        <taxon>Listeriaceae</taxon>
        <taxon>Listeria</taxon>
    </lineage>
</organism>
<reference key="1">
    <citation type="journal article" date="2011" name="J. Bacteriol.">
        <title>Genome sequence of lineage III Listeria monocytogenes strain HCC23.</title>
        <authorList>
            <person name="Steele C.L."/>
            <person name="Donaldson J.R."/>
            <person name="Paul D."/>
            <person name="Banes M.M."/>
            <person name="Arick T."/>
            <person name="Bridges S.M."/>
            <person name="Lawrence M.L."/>
        </authorList>
    </citation>
    <scope>NUCLEOTIDE SEQUENCE [LARGE SCALE GENOMIC DNA]</scope>
    <source>
        <strain>HCC23</strain>
    </source>
</reference>
<dbReference type="EC" id="6.1.1.11" evidence="1"/>
<dbReference type="EMBL" id="CP001175">
    <property type="protein sequence ID" value="ACK41119.1"/>
    <property type="molecule type" value="Genomic_DNA"/>
</dbReference>
<dbReference type="RefSeq" id="WP_003725040.1">
    <property type="nucleotide sequence ID" value="NC_011660.1"/>
</dbReference>
<dbReference type="SMR" id="B8DD73"/>
<dbReference type="KEGG" id="lmh:LMHCC_2785"/>
<dbReference type="HOGENOM" id="CLU_023797_1_1_9"/>
<dbReference type="UniPathway" id="UPA00906">
    <property type="reaction ID" value="UER00895"/>
</dbReference>
<dbReference type="GO" id="GO:0005737">
    <property type="term" value="C:cytoplasm"/>
    <property type="evidence" value="ECO:0007669"/>
    <property type="project" value="UniProtKB-SubCell"/>
</dbReference>
<dbReference type="GO" id="GO:0005524">
    <property type="term" value="F:ATP binding"/>
    <property type="evidence" value="ECO:0007669"/>
    <property type="project" value="UniProtKB-UniRule"/>
</dbReference>
<dbReference type="GO" id="GO:0140096">
    <property type="term" value="F:catalytic activity, acting on a protein"/>
    <property type="evidence" value="ECO:0007669"/>
    <property type="project" value="UniProtKB-ARBA"/>
</dbReference>
<dbReference type="GO" id="GO:0004828">
    <property type="term" value="F:serine-tRNA ligase activity"/>
    <property type="evidence" value="ECO:0007669"/>
    <property type="project" value="UniProtKB-UniRule"/>
</dbReference>
<dbReference type="GO" id="GO:0016740">
    <property type="term" value="F:transferase activity"/>
    <property type="evidence" value="ECO:0007669"/>
    <property type="project" value="UniProtKB-ARBA"/>
</dbReference>
<dbReference type="GO" id="GO:0016260">
    <property type="term" value="P:selenocysteine biosynthetic process"/>
    <property type="evidence" value="ECO:0007669"/>
    <property type="project" value="UniProtKB-UniRule"/>
</dbReference>
<dbReference type="GO" id="GO:0006434">
    <property type="term" value="P:seryl-tRNA aminoacylation"/>
    <property type="evidence" value="ECO:0007669"/>
    <property type="project" value="UniProtKB-UniRule"/>
</dbReference>
<dbReference type="CDD" id="cd00770">
    <property type="entry name" value="SerRS_core"/>
    <property type="match status" value="1"/>
</dbReference>
<dbReference type="Gene3D" id="3.30.930.10">
    <property type="entry name" value="Bira Bifunctional Protein, Domain 2"/>
    <property type="match status" value="1"/>
</dbReference>
<dbReference type="Gene3D" id="1.10.287.40">
    <property type="entry name" value="Serine-tRNA synthetase, tRNA binding domain"/>
    <property type="match status" value="1"/>
</dbReference>
<dbReference type="HAMAP" id="MF_00176">
    <property type="entry name" value="Ser_tRNA_synth_type1"/>
    <property type="match status" value="1"/>
</dbReference>
<dbReference type="InterPro" id="IPR002314">
    <property type="entry name" value="aa-tRNA-synt_IIb"/>
</dbReference>
<dbReference type="InterPro" id="IPR006195">
    <property type="entry name" value="aa-tRNA-synth_II"/>
</dbReference>
<dbReference type="InterPro" id="IPR045864">
    <property type="entry name" value="aa-tRNA-synth_II/BPL/LPL"/>
</dbReference>
<dbReference type="InterPro" id="IPR002317">
    <property type="entry name" value="Ser-tRNA-ligase_type_1"/>
</dbReference>
<dbReference type="InterPro" id="IPR015866">
    <property type="entry name" value="Ser-tRNA-synth_1_N"/>
</dbReference>
<dbReference type="InterPro" id="IPR042103">
    <property type="entry name" value="SerRS_1_N_sf"/>
</dbReference>
<dbReference type="InterPro" id="IPR033729">
    <property type="entry name" value="SerRS_core"/>
</dbReference>
<dbReference type="InterPro" id="IPR010978">
    <property type="entry name" value="tRNA-bd_arm"/>
</dbReference>
<dbReference type="NCBIfam" id="TIGR00414">
    <property type="entry name" value="serS"/>
    <property type="match status" value="1"/>
</dbReference>
<dbReference type="PANTHER" id="PTHR43697:SF1">
    <property type="entry name" value="SERINE--TRNA LIGASE"/>
    <property type="match status" value="1"/>
</dbReference>
<dbReference type="PANTHER" id="PTHR43697">
    <property type="entry name" value="SERYL-TRNA SYNTHETASE"/>
    <property type="match status" value="1"/>
</dbReference>
<dbReference type="Pfam" id="PF02403">
    <property type="entry name" value="Seryl_tRNA_N"/>
    <property type="match status" value="1"/>
</dbReference>
<dbReference type="Pfam" id="PF00587">
    <property type="entry name" value="tRNA-synt_2b"/>
    <property type="match status" value="1"/>
</dbReference>
<dbReference type="PIRSF" id="PIRSF001529">
    <property type="entry name" value="Ser-tRNA-synth_IIa"/>
    <property type="match status" value="1"/>
</dbReference>
<dbReference type="PRINTS" id="PR00981">
    <property type="entry name" value="TRNASYNTHSER"/>
</dbReference>
<dbReference type="SUPFAM" id="SSF55681">
    <property type="entry name" value="Class II aaRS and biotin synthetases"/>
    <property type="match status" value="1"/>
</dbReference>
<dbReference type="SUPFAM" id="SSF46589">
    <property type="entry name" value="tRNA-binding arm"/>
    <property type="match status" value="1"/>
</dbReference>
<dbReference type="PROSITE" id="PS50862">
    <property type="entry name" value="AA_TRNA_LIGASE_II"/>
    <property type="match status" value="1"/>
</dbReference>
<keyword id="KW-0030">Aminoacyl-tRNA synthetase</keyword>
<keyword id="KW-0067">ATP-binding</keyword>
<keyword id="KW-0963">Cytoplasm</keyword>
<keyword id="KW-0436">Ligase</keyword>
<keyword id="KW-0547">Nucleotide-binding</keyword>
<keyword id="KW-0648">Protein biosynthesis</keyword>